<sequence>MLLGSHVSMSGKKMLEGSAIEAYEYGETTFMIYTGAPQNTRRKSIEDLNITKGHEVMEKYGLSNIVVHAPYIINIANTTKPETFNLGVDFLQQEIERTQAIGAKDIVLHPGAHVGAGVDAGINKIIEGLNEVLTNDNNVRIALETMAGKGTEIGRSFEELARIIDGVHNNERLSVCFDTCHTHDAGYNVKEDFDGVLNEFDKIIGVDRIKVVHVNDSKNDRGAQKDRHENIGFGYIGFDALNYIVHHDSFKDIPKILETPYVGEDKKNKKPPYKLEIEMLKQQQFDPELKNKVMQQ</sequence>
<evidence type="ECO:0000255" key="1">
    <source>
        <dbReference type="HAMAP-Rule" id="MF_00152"/>
    </source>
</evidence>
<feature type="chain" id="PRO_1000011336" description="Probable endonuclease 4">
    <location>
        <begin position="1"/>
        <end position="296"/>
    </location>
</feature>
<feature type="binding site" evidence="1">
    <location>
        <position position="68"/>
    </location>
    <ligand>
        <name>Zn(2+)</name>
        <dbReference type="ChEBI" id="CHEBI:29105"/>
        <label>1</label>
    </ligand>
</feature>
<feature type="binding site" evidence="1">
    <location>
        <position position="109"/>
    </location>
    <ligand>
        <name>Zn(2+)</name>
        <dbReference type="ChEBI" id="CHEBI:29105"/>
        <label>1</label>
    </ligand>
</feature>
<feature type="binding site" evidence="1">
    <location>
        <position position="144"/>
    </location>
    <ligand>
        <name>Zn(2+)</name>
        <dbReference type="ChEBI" id="CHEBI:29105"/>
        <label>1</label>
    </ligand>
</feature>
<feature type="binding site" evidence="1">
    <location>
        <position position="144"/>
    </location>
    <ligand>
        <name>Zn(2+)</name>
        <dbReference type="ChEBI" id="CHEBI:29105"/>
        <label>2</label>
    </ligand>
</feature>
<feature type="binding site" evidence="1">
    <location>
        <position position="178"/>
    </location>
    <ligand>
        <name>Zn(2+)</name>
        <dbReference type="ChEBI" id="CHEBI:29105"/>
        <label>2</label>
    </ligand>
</feature>
<feature type="binding site" evidence="1">
    <location>
        <position position="181"/>
    </location>
    <ligand>
        <name>Zn(2+)</name>
        <dbReference type="ChEBI" id="CHEBI:29105"/>
        <label>3</label>
    </ligand>
</feature>
<feature type="binding site" evidence="1">
    <location>
        <position position="213"/>
    </location>
    <ligand>
        <name>Zn(2+)</name>
        <dbReference type="ChEBI" id="CHEBI:29105"/>
        <label>2</label>
    </ligand>
</feature>
<feature type="binding site" evidence="1">
    <location>
        <position position="226"/>
    </location>
    <ligand>
        <name>Zn(2+)</name>
        <dbReference type="ChEBI" id="CHEBI:29105"/>
        <label>3</label>
    </ligand>
</feature>
<feature type="binding site" evidence="1">
    <location>
        <position position="228"/>
    </location>
    <ligand>
        <name>Zn(2+)</name>
        <dbReference type="ChEBI" id="CHEBI:29105"/>
        <label>3</label>
    </ligand>
</feature>
<feature type="binding site" evidence="1">
    <location>
        <position position="258"/>
    </location>
    <ligand>
        <name>Zn(2+)</name>
        <dbReference type="ChEBI" id="CHEBI:29105"/>
        <label>2</label>
    </ligand>
</feature>
<comment type="function">
    <text evidence="1">Endonuclease IV plays a role in DNA repair. It cleaves phosphodiester bonds at apurinic or apyrimidinic (AP) sites, generating a 3'-hydroxyl group and a 5'-terminal sugar phosphate.</text>
</comment>
<comment type="catalytic activity">
    <reaction evidence="1">
        <text>Endonucleolytic cleavage to 5'-phosphooligonucleotide end-products.</text>
        <dbReference type="EC" id="3.1.21.2"/>
    </reaction>
</comment>
<comment type="cofactor">
    <cofactor evidence="1">
        <name>Zn(2+)</name>
        <dbReference type="ChEBI" id="CHEBI:29105"/>
    </cofactor>
    <text evidence="1">Binds 3 Zn(2+) ions.</text>
</comment>
<comment type="similarity">
    <text evidence="1">Belongs to the AP endonuclease 2 family.</text>
</comment>
<dbReference type="EC" id="3.1.21.2" evidence="1"/>
<dbReference type="EMBL" id="AP009324">
    <property type="protein sequence ID" value="BAF78427.1"/>
    <property type="molecule type" value="Genomic_DNA"/>
</dbReference>
<dbReference type="RefSeq" id="WP_000924220.1">
    <property type="nucleotide sequence ID" value="NC_009782.1"/>
</dbReference>
<dbReference type="SMR" id="A7X2V2"/>
<dbReference type="KEGG" id="saw:SAHV_1544"/>
<dbReference type="HOGENOM" id="CLU_025885_4_1_9"/>
<dbReference type="GO" id="GO:0008833">
    <property type="term" value="F:deoxyribonuclease IV (phage-T4-induced) activity"/>
    <property type="evidence" value="ECO:0007669"/>
    <property type="project" value="UniProtKB-UniRule"/>
</dbReference>
<dbReference type="GO" id="GO:0003677">
    <property type="term" value="F:DNA binding"/>
    <property type="evidence" value="ECO:0007669"/>
    <property type="project" value="InterPro"/>
</dbReference>
<dbReference type="GO" id="GO:0003906">
    <property type="term" value="F:DNA-(apurinic or apyrimidinic site) endonuclease activity"/>
    <property type="evidence" value="ECO:0007669"/>
    <property type="project" value="TreeGrafter"/>
</dbReference>
<dbReference type="GO" id="GO:0008081">
    <property type="term" value="F:phosphoric diester hydrolase activity"/>
    <property type="evidence" value="ECO:0007669"/>
    <property type="project" value="TreeGrafter"/>
</dbReference>
<dbReference type="GO" id="GO:0008270">
    <property type="term" value="F:zinc ion binding"/>
    <property type="evidence" value="ECO:0007669"/>
    <property type="project" value="UniProtKB-UniRule"/>
</dbReference>
<dbReference type="GO" id="GO:0006284">
    <property type="term" value="P:base-excision repair"/>
    <property type="evidence" value="ECO:0007669"/>
    <property type="project" value="TreeGrafter"/>
</dbReference>
<dbReference type="CDD" id="cd00019">
    <property type="entry name" value="AP2Ec"/>
    <property type="match status" value="1"/>
</dbReference>
<dbReference type="FunFam" id="3.20.20.150:FF:000001">
    <property type="entry name" value="Probable endonuclease 4"/>
    <property type="match status" value="1"/>
</dbReference>
<dbReference type="Gene3D" id="3.20.20.150">
    <property type="entry name" value="Divalent-metal-dependent TIM barrel enzymes"/>
    <property type="match status" value="1"/>
</dbReference>
<dbReference type="HAMAP" id="MF_00152">
    <property type="entry name" value="Nfo"/>
    <property type="match status" value="1"/>
</dbReference>
<dbReference type="InterPro" id="IPR001719">
    <property type="entry name" value="AP_endonuc_2"/>
</dbReference>
<dbReference type="InterPro" id="IPR018246">
    <property type="entry name" value="AP_endonuc_F2_Zn_BS"/>
</dbReference>
<dbReference type="InterPro" id="IPR036237">
    <property type="entry name" value="Xyl_isomerase-like_sf"/>
</dbReference>
<dbReference type="InterPro" id="IPR013022">
    <property type="entry name" value="Xyl_isomerase-like_TIM-brl"/>
</dbReference>
<dbReference type="NCBIfam" id="TIGR00587">
    <property type="entry name" value="nfo"/>
    <property type="match status" value="1"/>
</dbReference>
<dbReference type="NCBIfam" id="NF002196">
    <property type="entry name" value="PRK01060.1-1"/>
    <property type="match status" value="1"/>
</dbReference>
<dbReference type="PANTHER" id="PTHR21445:SF0">
    <property type="entry name" value="APURINIC-APYRIMIDINIC ENDONUCLEASE"/>
    <property type="match status" value="1"/>
</dbReference>
<dbReference type="PANTHER" id="PTHR21445">
    <property type="entry name" value="ENDONUCLEASE IV ENDODEOXYRIBONUCLEASE IV"/>
    <property type="match status" value="1"/>
</dbReference>
<dbReference type="Pfam" id="PF01261">
    <property type="entry name" value="AP_endonuc_2"/>
    <property type="match status" value="1"/>
</dbReference>
<dbReference type="SMART" id="SM00518">
    <property type="entry name" value="AP2Ec"/>
    <property type="match status" value="1"/>
</dbReference>
<dbReference type="SUPFAM" id="SSF51658">
    <property type="entry name" value="Xylose isomerase-like"/>
    <property type="match status" value="1"/>
</dbReference>
<dbReference type="PROSITE" id="PS00729">
    <property type="entry name" value="AP_NUCLEASE_F2_1"/>
    <property type="match status" value="1"/>
</dbReference>
<dbReference type="PROSITE" id="PS00730">
    <property type="entry name" value="AP_NUCLEASE_F2_2"/>
    <property type="match status" value="1"/>
</dbReference>
<dbReference type="PROSITE" id="PS00731">
    <property type="entry name" value="AP_NUCLEASE_F2_3"/>
    <property type="match status" value="1"/>
</dbReference>
<dbReference type="PROSITE" id="PS51432">
    <property type="entry name" value="AP_NUCLEASE_F2_4"/>
    <property type="match status" value="1"/>
</dbReference>
<proteinExistence type="inferred from homology"/>
<reference key="1">
    <citation type="journal article" date="2008" name="Antimicrob. Agents Chemother.">
        <title>Mutated response regulator graR is responsible for phenotypic conversion of Staphylococcus aureus from heterogeneous vancomycin-intermediate resistance to vancomycin-intermediate resistance.</title>
        <authorList>
            <person name="Neoh H.-M."/>
            <person name="Cui L."/>
            <person name="Yuzawa H."/>
            <person name="Takeuchi F."/>
            <person name="Matsuo M."/>
            <person name="Hiramatsu K."/>
        </authorList>
    </citation>
    <scope>NUCLEOTIDE SEQUENCE [LARGE SCALE GENOMIC DNA]</scope>
    <source>
        <strain>Mu3 / ATCC 700698</strain>
    </source>
</reference>
<protein>
    <recommendedName>
        <fullName evidence="1">Probable endonuclease 4</fullName>
        <ecNumber evidence="1">3.1.21.2</ecNumber>
    </recommendedName>
    <alternativeName>
        <fullName evidence="1">Endodeoxyribonuclease IV</fullName>
    </alternativeName>
    <alternativeName>
        <fullName evidence="1">Endonuclease IV</fullName>
    </alternativeName>
</protein>
<accession>A7X2V2</accession>
<name>END4_STAA1</name>
<keyword id="KW-0227">DNA damage</keyword>
<keyword id="KW-0234">DNA repair</keyword>
<keyword id="KW-0255">Endonuclease</keyword>
<keyword id="KW-0378">Hydrolase</keyword>
<keyword id="KW-0479">Metal-binding</keyword>
<keyword id="KW-0540">Nuclease</keyword>
<keyword id="KW-0862">Zinc</keyword>
<gene>
    <name evidence="1" type="primary">nfo</name>
    <name type="ordered locus">SAHV_1544</name>
</gene>
<organism>
    <name type="scientific">Staphylococcus aureus (strain Mu3 / ATCC 700698)</name>
    <dbReference type="NCBI Taxonomy" id="418127"/>
    <lineage>
        <taxon>Bacteria</taxon>
        <taxon>Bacillati</taxon>
        <taxon>Bacillota</taxon>
        <taxon>Bacilli</taxon>
        <taxon>Bacillales</taxon>
        <taxon>Staphylococcaceae</taxon>
        <taxon>Staphylococcus</taxon>
    </lineage>
</organism>